<dbReference type="EMBL" id="AB099081">
    <property type="protein sequence ID" value="BAC56571.1"/>
    <property type="molecule type" value="mRNA"/>
</dbReference>
<dbReference type="EMBL" id="AY528251">
    <property type="protein sequence ID" value="AAS20599.1"/>
    <property type="molecule type" value="mRNA"/>
</dbReference>
<dbReference type="EMBL" id="AY911345">
    <property type="protein sequence ID" value="AAW82112.1"/>
    <property type="molecule type" value="mRNA"/>
</dbReference>
<dbReference type="EMBL" id="BC102500">
    <property type="protein sequence ID" value="AAI02501.1"/>
    <property type="molecule type" value="mRNA"/>
</dbReference>
<dbReference type="EMBL" id="DQ347612">
    <property type="protein sequence ID" value="ABC84246.1"/>
    <property type="molecule type" value="mRNA"/>
</dbReference>
<dbReference type="RefSeq" id="NP_001014409.1">
    <property type="nucleotide sequence ID" value="NM_001014387.2"/>
</dbReference>
<dbReference type="RefSeq" id="XP_005210987.1">
    <property type="nucleotide sequence ID" value="XM_005210930.5"/>
</dbReference>
<dbReference type="RefSeq" id="XP_005210988.1">
    <property type="nucleotide sequence ID" value="XM_005210931.4"/>
</dbReference>
<dbReference type="SMR" id="Q76I81"/>
<dbReference type="FunCoup" id="Q76I81">
    <property type="interactions" value="2523"/>
</dbReference>
<dbReference type="STRING" id="9913.ENSBTAP00000048421"/>
<dbReference type="PaxDb" id="9913-ENSBTAP00000001791"/>
<dbReference type="PeptideAtlas" id="Q76I81"/>
<dbReference type="Ensembl" id="ENSBTAT00000001791.4">
    <property type="protein sequence ID" value="ENSBTAP00000001791.3"/>
    <property type="gene ID" value="ENSBTAG00000001360.6"/>
</dbReference>
<dbReference type="GeneID" id="326582"/>
<dbReference type="KEGG" id="bta:326582"/>
<dbReference type="CTD" id="6206"/>
<dbReference type="VEuPathDB" id="HostDB:ENSBTAG00000001360"/>
<dbReference type="VGNC" id="VGNC:56365">
    <property type="gene designation" value="RPS12"/>
</dbReference>
<dbReference type="eggNOG" id="KOG3406">
    <property type="taxonomic scope" value="Eukaryota"/>
</dbReference>
<dbReference type="GeneTree" id="ENSGT00390000018318"/>
<dbReference type="HOGENOM" id="CLU_110343_1_1_1"/>
<dbReference type="InParanoid" id="Q76I81"/>
<dbReference type="OMA" id="DLGQWVG"/>
<dbReference type="OrthoDB" id="10249311at2759"/>
<dbReference type="TreeFam" id="TF300196"/>
<dbReference type="Reactome" id="R-BTA-156827">
    <property type="pathway name" value="L13a-mediated translational silencing of Ceruloplasmin expression"/>
</dbReference>
<dbReference type="Reactome" id="R-BTA-1799339">
    <property type="pathway name" value="SRP-dependent cotranslational protein targeting to membrane"/>
</dbReference>
<dbReference type="Reactome" id="R-BTA-6791226">
    <property type="pathway name" value="Major pathway of rRNA processing in the nucleolus and cytosol"/>
</dbReference>
<dbReference type="Reactome" id="R-BTA-72649">
    <property type="pathway name" value="Translation initiation complex formation"/>
</dbReference>
<dbReference type="Reactome" id="R-BTA-72689">
    <property type="pathway name" value="Formation of a pool of free 40S subunits"/>
</dbReference>
<dbReference type="Reactome" id="R-BTA-72695">
    <property type="pathway name" value="Formation of the ternary complex, and subsequently, the 43S complex"/>
</dbReference>
<dbReference type="Reactome" id="R-BTA-72702">
    <property type="pathway name" value="Ribosomal scanning and start codon recognition"/>
</dbReference>
<dbReference type="Reactome" id="R-BTA-72706">
    <property type="pathway name" value="GTP hydrolysis and joining of the 60S ribosomal subunit"/>
</dbReference>
<dbReference type="Reactome" id="R-BTA-975956">
    <property type="pathway name" value="Nonsense Mediated Decay (NMD) independent of the Exon Junction Complex (EJC)"/>
</dbReference>
<dbReference type="Reactome" id="R-BTA-975957">
    <property type="pathway name" value="Nonsense Mediated Decay (NMD) enhanced by the Exon Junction Complex (EJC)"/>
</dbReference>
<dbReference type="CD-CODE" id="D7FE2080">
    <property type="entry name" value="Nucleolus"/>
</dbReference>
<dbReference type="Proteomes" id="UP000009136">
    <property type="component" value="Chromosome 9"/>
</dbReference>
<dbReference type="Bgee" id="ENSBTAG00000001360">
    <property type="expression patterns" value="Expressed in blood and 103 other cell types or tissues"/>
</dbReference>
<dbReference type="GO" id="GO:0022627">
    <property type="term" value="C:cytosolic small ribosomal subunit"/>
    <property type="evidence" value="ECO:0000318"/>
    <property type="project" value="GO_Central"/>
</dbReference>
<dbReference type="GO" id="GO:0005794">
    <property type="term" value="C:Golgi apparatus"/>
    <property type="evidence" value="ECO:0007669"/>
    <property type="project" value="Ensembl"/>
</dbReference>
<dbReference type="GO" id="GO:0005730">
    <property type="term" value="C:nucleolus"/>
    <property type="evidence" value="ECO:0007669"/>
    <property type="project" value="UniProtKB-SubCell"/>
</dbReference>
<dbReference type="GO" id="GO:0032040">
    <property type="term" value="C:small-subunit processome"/>
    <property type="evidence" value="ECO:0000250"/>
    <property type="project" value="UniProtKB"/>
</dbReference>
<dbReference type="GO" id="GO:0003735">
    <property type="term" value="F:structural constituent of ribosome"/>
    <property type="evidence" value="ECO:0000318"/>
    <property type="project" value="GO_Central"/>
</dbReference>
<dbReference type="GO" id="GO:1990145">
    <property type="term" value="P:maintenance of translational fidelity"/>
    <property type="evidence" value="ECO:0000318"/>
    <property type="project" value="GO_Central"/>
</dbReference>
<dbReference type="GO" id="GO:0090263">
    <property type="term" value="P:positive regulation of canonical Wnt signaling pathway"/>
    <property type="evidence" value="ECO:0007669"/>
    <property type="project" value="Ensembl"/>
</dbReference>
<dbReference type="GO" id="GO:0042274">
    <property type="term" value="P:ribosomal small subunit biogenesis"/>
    <property type="evidence" value="ECO:0000250"/>
    <property type="project" value="UniProtKB"/>
</dbReference>
<dbReference type="FunFam" id="3.30.1330.30:FF:000011">
    <property type="entry name" value="40S ribosomal protein S12"/>
    <property type="match status" value="1"/>
</dbReference>
<dbReference type="Gene3D" id="3.30.1330.30">
    <property type="match status" value="1"/>
</dbReference>
<dbReference type="InterPro" id="IPR029064">
    <property type="entry name" value="Ribosomal_eL30-like_sf"/>
</dbReference>
<dbReference type="InterPro" id="IPR004038">
    <property type="entry name" value="Ribosomal_eL8/eL30/eS12/Gad45"/>
</dbReference>
<dbReference type="InterPro" id="IPR000530">
    <property type="entry name" value="Ribosomal_eS12"/>
</dbReference>
<dbReference type="InterPro" id="IPR047860">
    <property type="entry name" value="Ribosomal_eS12_CS"/>
</dbReference>
<dbReference type="PANTHER" id="PTHR11843">
    <property type="entry name" value="40S RIBOSOMAL PROTEIN S12"/>
    <property type="match status" value="1"/>
</dbReference>
<dbReference type="Pfam" id="PF01248">
    <property type="entry name" value="Ribosomal_L7Ae"/>
    <property type="match status" value="1"/>
</dbReference>
<dbReference type="PRINTS" id="PR00972">
    <property type="entry name" value="RIBSOMALS12E"/>
</dbReference>
<dbReference type="SUPFAM" id="SSF55315">
    <property type="entry name" value="L30e-like"/>
    <property type="match status" value="1"/>
</dbReference>
<dbReference type="PROSITE" id="PS01189">
    <property type="entry name" value="RIBOSOMAL_S12E"/>
    <property type="match status" value="1"/>
</dbReference>
<proteinExistence type="evidence at transcript level"/>
<evidence type="ECO:0000250" key="1">
    <source>
        <dbReference type="UniProtKB" id="P25398"/>
    </source>
</evidence>
<evidence type="ECO:0000250" key="2">
    <source>
        <dbReference type="UniProtKB" id="P63323"/>
    </source>
</evidence>
<evidence type="ECO:0000250" key="3">
    <source>
        <dbReference type="UniProtKB" id="P80455"/>
    </source>
</evidence>
<evidence type="ECO:0000305" key="4"/>
<organism>
    <name type="scientific">Bos taurus</name>
    <name type="common">Bovine</name>
    <dbReference type="NCBI Taxonomy" id="9913"/>
    <lineage>
        <taxon>Eukaryota</taxon>
        <taxon>Metazoa</taxon>
        <taxon>Chordata</taxon>
        <taxon>Craniata</taxon>
        <taxon>Vertebrata</taxon>
        <taxon>Euteleostomi</taxon>
        <taxon>Mammalia</taxon>
        <taxon>Eutheria</taxon>
        <taxon>Laurasiatheria</taxon>
        <taxon>Artiodactyla</taxon>
        <taxon>Ruminantia</taxon>
        <taxon>Pecora</taxon>
        <taxon>Bovidae</taxon>
        <taxon>Bovinae</taxon>
        <taxon>Bos</taxon>
    </lineage>
</organism>
<comment type="function">
    <text evidence="1 3">Part of the small subunit (SSU) processome, first precursor of the small eukaryotic ribosomal subunit. During the assembly of the SSU processome in the nucleolus, many ribosome biogenesis factors, an RNA chaperone and ribosomal proteins associate with the nascent pre-rRNA and work in concert to generate RNA folding, modifications, rearrangements and cleavage as well as targeted degradation of pre-ribosomal RNA by the RNA exosome (By similarity). Subunit of the 40S ribosomal complex (By similarity).</text>
</comment>
<comment type="subunit">
    <text evidence="1 3">Part of the small subunit (SSU) processome, composed of more than 70 proteins and the RNA chaperone small nucleolar RNA (snoRNA) U3 (By similarity). Subunit of the 40S ribosomal complex (By similarity).</text>
</comment>
<comment type="subcellular location">
    <subcellularLocation>
        <location evidence="1">Nucleus</location>
        <location evidence="1">Nucleolus</location>
    </subcellularLocation>
</comment>
<comment type="similarity">
    <text evidence="4">Belongs to the eukaryotic ribosomal protein eS12 family.</text>
</comment>
<protein>
    <recommendedName>
        <fullName evidence="4">Small ribosomal subunit protein eS12</fullName>
    </recommendedName>
    <alternativeName>
        <fullName>40S ribosomal protein S12</fullName>
    </alternativeName>
</protein>
<accession>Q76I81</accession>
<accession>A1XED7</accession>
<accession>Q862U6</accession>
<sequence length="132" mass="14515">MAEEGIAAGGVMDVNTALQEVLKTALIHDGLARGIREAAKALDKRQAHLCVLASNCDEPMYVKLVEALCAEHQINLIKVDDNKKLGEWVGLCKIDREGKPRKVVGCSCVVVKDYGKESQAKDVIEEYFKCKK</sequence>
<keyword id="KW-0007">Acetylation</keyword>
<keyword id="KW-0539">Nucleus</keyword>
<keyword id="KW-1185">Reference proteome</keyword>
<keyword id="KW-0687">Ribonucleoprotein</keyword>
<keyword id="KW-0689">Ribosomal protein</keyword>
<name>RS12_BOVIN</name>
<reference key="1">
    <citation type="journal article" date="2003" name="Mol. Reprod. Dev.">
        <title>Characterization of gene expression profiles in early bovine pregnancy using a custom cDNA microarray.</title>
        <authorList>
            <person name="Ishiwata H."/>
            <person name="Katsuma S."/>
            <person name="Kizaki K."/>
            <person name="Patel O.V."/>
            <person name="Nakano H."/>
            <person name="Takahashi T."/>
            <person name="Imai K."/>
            <person name="Hirasawa A."/>
            <person name="Shiojima S."/>
            <person name="Ikawa H."/>
            <person name="Suzuki Y."/>
            <person name="Tsujimoto G."/>
            <person name="Izaike Y."/>
            <person name="Todoroki J."/>
            <person name="Hashizume K."/>
        </authorList>
    </citation>
    <scope>NUCLEOTIDE SEQUENCE [MRNA]</scope>
</reference>
<reference key="2">
    <citation type="submission" date="2004-01" db="EMBL/GenBank/DDBJ databases">
        <title>Analysis of gene expression in the bovine blastocyst or hatched blastocyst in vitro using ACP method.</title>
        <authorList>
            <person name="Shin M.L."/>
            <person name="Cui X.S."/>
            <person name="Park S.Y."/>
            <person name="Kim E.Y."/>
            <person name="Park S.P."/>
            <person name="Lee W.J."/>
            <person name="Hwang K.C."/>
            <person name="Kim N.H."/>
        </authorList>
    </citation>
    <scope>NUCLEOTIDE SEQUENCE [MRNA]</scope>
</reference>
<reference key="3">
    <citation type="submission" date="2005-01" db="EMBL/GenBank/DDBJ databases">
        <title>Analysis of sequences obtained from constructed full-length bovine cDNA libraries.</title>
        <authorList>
            <person name="Yu J."/>
            <person name="Meng Y."/>
            <person name="Wang Z."/>
            <person name="Hansen C."/>
            <person name="Li C."/>
            <person name="Moore S."/>
        </authorList>
    </citation>
    <scope>NUCLEOTIDE SEQUENCE [LARGE SCALE MRNA]</scope>
    <source>
        <tissue>Lymphoid epithelium</tissue>
    </source>
</reference>
<reference key="4">
    <citation type="submission" date="2005-08" db="EMBL/GenBank/DDBJ databases">
        <authorList>
            <consortium name="NIH - Mammalian Gene Collection (MGC) project"/>
        </authorList>
    </citation>
    <scope>NUCLEOTIDE SEQUENCE [LARGE SCALE MRNA]</scope>
    <source>
        <strain>Crossbred X Angus</strain>
        <tissue>Ileum</tissue>
    </source>
</reference>
<reference key="5">
    <citation type="submission" date="2005-12" db="EMBL/GenBank/DDBJ databases">
        <title>Identification and quantitative analysis of gene transcripts associated with bovine blastocyst formation.</title>
        <authorList>
            <person name="Goossens K."/>
            <person name="Van Poucke M."/>
            <person name="Van Soom A."/>
            <person name="Vandesompele J."/>
            <person name="Van Zeveren A."/>
            <person name="Peelman L.J."/>
        </authorList>
    </citation>
    <scope>NUCLEOTIDE SEQUENCE [MRNA] OF 1-102</scope>
</reference>
<feature type="initiator methionine" description="Removed" evidence="1">
    <location>
        <position position="1"/>
    </location>
</feature>
<feature type="chain" id="PRO_0000312398" description="Small ribosomal subunit protein eS12">
    <location>
        <begin position="2"/>
        <end position="132"/>
    </location>
</feature>
<feature type="modified residue" description="N-acetylalanine" evidence="1">
    <location>
        <position position="2"/>
    </location>
</feature>
<feature type="modified residue" description="N6-succinyllysine" evidence="2">
    <location>
        <position position="129"/>
    </location>
</feature>
<gene>
    <name type="primary">RPS12</name>
</gene>